<protein>
    <recommendedName>
        <fullName>Adenosine receptor A2b</fullName>
    </recommendedName>
</protein>
<gene>
    <name type="primary">Adora2b</name>
</gene>
<comment type="function">
    <text>Receptor for adenosine. The activity of this receptor is mediated by G proteins which activate adenylyl cyclase.</text>
</comment>
<comment type="subcellular location">
    <subcellularLocation>
        <location>Cell membrane</location>
        <topology>Multi-pass membrane protein</topology>
    </subcellularLocation>
</comment>
<comment type="similarity">
    <text evidence="4">Belongs to the G-protein coupled receptor 1 family.</text>
</comment>
<feature type="chain" id="PRO_0000069004" description="Adenosine receptor A2b">
    <location>
        <begin position="1"/>
        <end position="332"/>
    </location>
</feature>
<feature type="topological domain" description="Extracellular" evidence="1">
    <location>
        <begin position="1"/>
        <end position="8"/>
    </location>
</feature>
<feature type="transmembrane region" description="Helical; Name=1" evidence="1">
    <location>
        <begin position="9"/>
        <end position="33"/>
    </location>
</feature>
<feature type="topological domain" description="Cytoplasmic" evidence="1">
    <location>
        <begin position="34"/>
        <end position="43"/>
    </location>
</feature>
<feature type="transmembrane region" description="Helical; Name=2" evidence="1">
    <location>
        <begin position="44"/>
        <end position="67"/>
    </location>
</feature>
<feature type="topological domain" description="Extracellular" evidence="1">
    <location>
        <begin position="68"/>
        <end position="78"/>
    </location>
</feature>
<feature type="transmembrane region" description="Helical; Name=3" evidence="1">
    <location>
        <begin position="79"/>
        <end position="101"/>
    </location>
</feature>
<feature type="topological domain" description="Cytoplasmic" evidence="1">
    <location>
        <begin position="102"/>
        <end position="121"/>
    </location>
</feature>
<feature type="transmembrane region" description="Helical; Name=4" evidence="1">
    <location>
        <begin position="122"/>
        <end position="144"/>
    </location>
</feature>
<feature type="topological domain" description="Extracellular" evidence="1">
    <location>
        <begin position="145"/>
        <end position="178"/>
    </location>
</feature>
<feature type="transmembrane region" description="Helical; Name=5" evidence="1">
    <location>
        <begin position="179"/>
        <end position="203"/>
    </location>
</feature>
<feature type="topological domain" description="Cytoplasmic" evidence="1">
    <location>
        <begin position="204"/>
        <end position="235"/>
    </location>
</feature>
<feature type="transmembrane region" description="Helical; Name=6" evidence="1">
    <location>
        <begin position="236"/>
        <end position="259"/>
    </location>
</feature>
<feature type="topological domain" description="Extracellular" evidence="1">
    <location>
        <begin position="260"/>
        <end position="267"/>
    </location>
</feature>
<feature type="transmembrane region" description="Helical; Name=7" evidence="1">
    <location>
        <begin position="268"/>
        <end position="291"/>
    </location>
</feature>
<feature type="topological domain" description="Cytoplasmic" evidence="1">
    <location>
        <begin position="292"/>
        <end position="332"/>
    </location>
</feature>
<feature type="binding site" evidence="2">
    <location>
        <position position="174"/>
    </location>
    <ligand>
        <name>adenosine</name>
        <dbReference type="ChEBI" id="CHEBI:16335"/>
        <note>agonist</note>
    </ligand>
</feature>
<feature type="binding site" evidence="2">
    <location>
        <position position="254"/>
    </location>
    <ligand>
        <name>adenosine</name>
        <dbReference type="ChEBI" id="CHEBI:16335"/>
        <note>agonist</note>
    </ligand>
</feature>
<feature type="binding site" evidence="2">
    <location>
        <position position="279"/>
    </location>
    <ligand>
        <name>adenosine</name>
        <dbReference type="ChEBI" id="CHEBI:16335"/>
        <note>agonist</note>
    </ligand>
</feature>
<feature type="binding site" evidence="2">
    <location>
        <position position="280"/>
    </location>
    <ligand>
        <name>adenosine</name>
        <dbReference type="ChEBI" id="CHEBI:16335"/>
        <note>agonist</note>
    </ligand>
</feature>
<feature type="lipid moiety-binding region" description="S-palmitoyl cysteine" evidence="3">
    <location>
        <position position="311"/>
    </location>
</feature>
<feature type="glycosylation site" description="N-linked (GlcNAc...) asparagine" evidence="3">
    <location>
        <position position="153"/>
    </location>
</feature>
<feature type="glycosylation site" description="N-linked (GlcNAc...) asparagine" evidence="3">
    <location>
        <position position="163"/>
    </location>
</feature>
<feature type="disulfide bond" evidence="4">
    <location>
        <begin position="78"/>
        <end position="171"/>
    </location>
</feature>
<feature type="sequence conflict" description="In Ref. 1; AAA19001." evidence="5" ref="1">
    <original>V</original>
    <variation>L</variation>
    <location>
        <position position="169"/>
    </location>
</feature>
<feature type="sequence conflict" description="In Ref. 1; AAA19001." evidence="5" ref="1">
    <original>R</original>
    <variation>S</variation>
    <location>
        <position position="215"/>
    </location>
</feature>
<name>AA2BR_MOUSE</name>
<dbReference type="EMBL" id="U05673">
    <property type="protein sequence ID" value="AAA19001.1"/>
    <property type="molecule type" value="mRNA"/>
</dbReference>
<dbReference type="EMBL" id="AK047002">
    <property type="protein sequence ID" value="BAC32938.1"/>
    <property type="molecule type" value="mRNA"/>
</dbReference>
<dbReference type="EMBL" id="AL596110">
    <property type="status" value="NOT_ANNOTATED_CDS"/>
    <property type="molecule type" value="Genomic_DNA"/>
</dbReference>
<dbReference type="EMBL" id="BC116415">
    <property type="protein sequence ID" value="AAI16416.1"/>
    <property type="molecule type" value="mRNA"/>
</dbReference>
<dbReference type="EMBL" id="BC116416">
    <property type="protein sequence ID" value="AAI16417.1"/>
    <property type="molecule type" value="mRNA"/>
</dbReference>
<dbReference type="CCDS" id="CCDS24822.1"/>
<dbReference type="PIR" id="I48933">
    <property type="entry name" value="I48933"/>
</dbReference>
<dbReference type="RefSeq" id="NP_031439.2">
    <property type="nucleotide sequence ID" value="NM_007413.4"/>
</dbReference>
<dbReference type="SMR" id="Q60614"/>
<dbReference type="CORUM" id="Q60614"/>
<dbReference type="FunCoup" id="Q60614">
    <property type="interactions" value="787"/>
</dbReference>
<dbReference type="STRING" id="10090.ENSMUSP00000018644"/>
<dbReference type="BindingDB" id="Q60614"/>
<dbReference type="ChEMBL" id="CHEMBL2237"/>
<dbReference type="DrugCentral" id="Q60614"/>
<dbReference type="GuidetoPHARMACOLOGY" id="20"/>
<dbReference type="GlyCosmos" id="Q60614">
    <property type="glycosylation" value="2 sites, No reported glycans"/>
</dbReference>
<dbReference type="GlyGen" id="Q60614">
    <property type="glycosylation" value="2 sites"/>
</dbReference>
<dbReference type="iPTMnet" id="Q60614"/>
<dbReference type="PhosphoSitePlus" id="Q60614"/>
<dbReference type="SwissPalm" id="Q60614"/>
<dbReference type="PaxDb" id="10090-ENSMUSP00000018644"/>
<dbReference type="Antibodypedia" id="25203">
    <property type="antibodies" value="296 antibodies from 36 providers"/>
</dbReference>
<dbReference type="DNASU" id="11541"/>
<dbReference type="Ensembl" id="ENSMUST00000018644.3">
    <property type="protein sequence ID" value="ENSMUSP00000018644.3"/>
    <property type="gene ID" value="ENSMUSG00000018500.3"/>
</dbReference>
<dbReference type="GeneID" id="11541"/>
<dbReference type="KEGG" id="mmu:11541"/>
<dbReference type="UCSC" id="uc007jio.1">
    <property type="organism name" value="mouse"/>
</dbReference>
<dbReference type="AGR" id="MGI:99403"/>
<dbReference type="CTD" id="136"/>
<dbReference type="MGI" id="MGI:99403">
    <property type="gene designation" value="Adora2b"/>
</dbReference>
<dbReference type="VEuPathDB" id="HostDB:ENSMUSG00000018500"/>
<dbReference type="eggNOG" id="KOG3656">
    <property type="taxonomic scope" value="Eukaryota"/>
</dbReference>
<dbReference type="GeneTree" id="ENSGT01030000234555"/>
<dbReference type="HOGENOM" id="CLU_009579_11_5_1"/>
<dbReference type="InParanoid" id="Q60614"/>
<dbReference type="OMA" id="PVKCLFE"/>
<dbReference type="OrthoDB" id="9445642at2759"/>
<dbReference type="PhylomeDB" id="Q60614"/>
<dbReference type="TreeFam" id="TF325296"/>
<dbReference type="Reactome" id="R-MMU-417973">
    <property type="pathway name" value="Adenosine P1 receptors"/>
</dbReference>
<dbReference type="Reactome" id="R-MMU-418555">
    <property type="pathway name" value="G alpha (s) signalling events"/>
</dbReference>
<dbReference type="Reactome" id="R-MMU-5683826">
    <property type="pathway name" value="Surfactant metabolism"/>
</dbReference>
<dbReference type="BioGRID-ORCS" id="11541">
    <property type="hits" value="2 hits in 79 CRISPR screens"/>
</dbReference>
<dbReference type="ChiTaRS" id="Adora2b">
    <property type="organism name" value="mouse"/>
</dbReference>
<dbReference type="PRO" id="PR:Q60614"/>
<dbReference type="Proteomes" id="UP000000589">
    <property type="component" value="Chromosome 11"/>
</dbReference>
<dbReference type="RNAct" id="Q60614">
    <property type="molecule type" value="protein"/>
</dbReference>
<dbReference type="Bgee" id="ENSMUSG00000018500">
    <property type="expression patterns" value="Expressed in gastrula and 125 other cell types or tissues"/>
</dbReference>
<dbReference type="GO" id="GO:0098978">
    <property type="term" value="C:glutamatergic synapse"/>
    <property type="evidence" value="ECO:0000314"/>
    <property type="project" value="SynGO"/>
</dbReference>
<dbReference type="GO" id="GO:0005886">
    <property type="term" value="C:plasma membrane"/>
    <property type="evidence" value="ECO:0000314"/>
    <property type="project" value="MGI"/>
</dbReference>
<dbReference type="GO" id="GO:0098793">
    <property type="term" value="C:presynapse"/>
    <property type="evidence" value="ECO:0007669"/>
    <property type="project" value="GOC"/>
</dbReference>
<dbReference type="GO" id="GO:0098685">
    <property type="term" value="C:Schaffer collateral - CA1 synapse"/>
    <property type="evidence" value="ECO:0000314"/>
    <property type="project" value="SynGO"/>
</dbReference>
<dbReference type="GO" id="GO:0045202">
    <property type="term" value="C:synapse"/>
    <property type="evidence" value="ECO:0000314"/>
    <property type="project" value="SynGO"/>
</dbReference>
<dbReference type="GO" id="GO:0001609">
    <property type="term" value="F:G protein-coupled adenosine receptor activity"/>
    <property type="evidence" value="ECO:0000314"/>
    <property type="project" value="MGI"/>
</dbReference>
<dbReference type="GO" id="GO:0004930">
    <property type="term" value="F:G protein-coupled receptor activity"/>
    <property type="evidence" value="ECO:0000315"/>
    <property type="project" value="MGI"/>
</dbReference>
<dbReference type="GO" id="GO:0007189">
    <property type="term" value="P:adenylate cyclase-activating G protein-coupled receptor signaling pathway"/>
    <property type="evidence" value="ECO:0000315"/>
    <property type="project" value="MGI"/>
</dbReference>
<dbReference type="GO" id="GO:0019934">
    <property type="term" value="P:cGMP-mediated signaling"/>
    <property type="evidence" value="ECO:0000315"/>
    <property type="project" value="MGI"/>
</dbReference>
<dbReference type="GO" id="GO:0001973">
    <property type="term" value="P:G protein-coupled adenosine receptor signaling pathway"/>
    <property type="evidence" value="ECO:0000314"/>
    <property type="project" value="MGI"/>
</dbReference>
<dbReference type="GO" id="GO:0043303">
    <property type="term" value="P:mast cell degranulation"/>
    <property type="evidence" value="ECO:0000315"/>
    <property type="project" value="MGI"/>
</dbReference>
<dbReference type="GO" id="GO:0010753">
    <property type="term" value="P:positive regulation of cGMP-mediated signaling"/>
    <property type="evidence" value="ECO:0000315"/>
    <property type="project" value="MGI"/>
</dbReference>
<dbReference type="GO" id="GO:0032722">
    <property type="term" value="P:positive regulation of chemokine production"/>
    <property type="evidence" value="ECO:0000315"/>
    <property type="project" value="MGI"/>
</dbReference>
<dbReference type="GO" id="GO:0002882">
    <property type="term" value="P:positive regulation of chronic inflammatory response to non-antigenic stimulus"/>
    <property type="evidence" value="ECO:0000315"/>
    <property type="project" value="MGI"/>
</dbReference>
<dbReference type="GO" id="GO:0032755">
    <property type="term" value="P:positive regulation of interleukin-6 production"/>
    <property type="evidence" value="ECO:0000315"/>
    <property type="project" value="MGI"/>
</dbReference>
<dbReference type="GO" id="GO:0043306">
    <property type="term" value="P:positive regulation of mast cell degranulation"/>
    <property type="evidence" value="ECO:0000315"/>
    <property type="project" value="MGI"/>
</dbReference>
<dbReference type="GO" id="GO:0010575">
    <property type="term" value="P:positive regulation of vascular endothelial growth factor production"/>
    <property type="evidence" value="ECO:0000315"/>
    <property type="project" value="MGI"/>
</dbReference>
<dbReference type="GO" id="GO:0099171">
    <property type="term" value="P:presynaptic modulation of chemical synaptic transmission"/>
    <property type="evidence" value="ECO:0000314"/>
    <property type="project" value="SynGO"/>
</dbReference>
<dbReference type="GO" id="GO:0060087">
    <property type="term" value="P:relaxation of vascular associated smooth muscle"/>
    <property type="evidence" value="ECO:0000315"/>
    <property type="project" value="MGI"/>
</dbReference>
<dbReference type="CDD" id="cd15069">
    <property type="entry name" value="7tmA_Adenosine_R_A2B"/>
    <property type="match status" value="1"/>
</dbReference>
<dbReference type="FunFam" id="1.20.1070.10:FF:000061">
    <property type="entry name" value="Adenosine receptor A2"/>
    <property type="match status" value="1"/>
</dbReference>
<dbReference type="Gene3D" id="1.20.1070.10">
    <property type="entry name" value="Rhodopsin 7-helix transmembrane proteins"/>
    <property type="match status" value="1"/>
</dbReference>
<dbReference type="InterPro" id="IPR001435">
    <property type="entry name" value="Adeno_A2B_rcpt"/>
</dbReference>
<dbReference type="InterPro" id="IPR001634">
    <property type="entry name" value="Adenosn_rcpt"/>
</dbReference>
<dbReference type="InterPro" id="IPR000276">
    <property type="entry name" value="GPCR_Rhodpsn"/>
</dbReference>
<dbReference type="InterPro" id="IPR017452">
    <property type="entry name" value="GPCR_Rhodpsn_7TM"/>
</dbReference>
<dbReference type="PANTHER" id="PTHR24246:SF18">
    <property type="entry name" value="ADENOSINE RECEPTOR A2B"/>
    <property type="match status" value="1"/>
</dbReference>
<dbReference type="PANTHER" id="PTHR24246">
    <property type="entry name" value="OLFACTORY RECEPTOR AND ADENOSINE RECEPTOR"/>
    <property type="match status" value="1"/>
</dbReference>
<dbReference type="Pfam" id="PF00001">
    <property type="entry name" value="7tm_1"/>
    <property type="match status" value="1"/>
</dbReference>
<dbReference type="PRINTS" id="PR00554">
    <property type="entry name" value="ADENOSINA2BR"/>
</dbReference>
<dbReference type="PRINTS" id="PR00424">
    <property type="entry name" value="ADENOSINER"/>
</dbReference>
<dbReference type="PRINTS" id="PR00237">
    <property type="entry name" value="GPCRRHODOPSN"/>
</dbReference>
<dbReference type="SMART" id="SM01381">
    <property type="entry name" value="7TM_GPCR_Srsx"/>
    <property type="match status" value="1"/>
</dbReference>
<dbReference type="SUPFAM" id="SSF81321">
    <property type="entry name" value="Family A G protein-coupled receptor-like"/>
    <property type="match status" value="1"/>
</dbReference>
<dbReference type="PROSITE" id="PS00237">
    <property type="entry name" value="G_PROTEIN_RECEP_F1_1"/>
    <property type="match status" value="1"/>
</dbReference>
<dbReference type="PROSITE" id="PS50262">
    <property type="entry name" value="G_PROTEIN_RECEP_F1_2"/>
    <property type="match status" value="1"/>
</dbReference>
<proteinExistence type="evidence at transcript level"/>
<keyword id="KW-1003">Cell membrane</keyword>
<keyword id="KW-1015">Disulfide bond</keyword>
<keyword id="KW-0297">G-protein coupled receptor</keyword>
<keyword id="KW-0325">Glycoprotein</keyword>
<keyword id="KW-0449">Lipoprotein</keyword>
<keyword id="KW-0472">Membrane</keyword>
<keyword id="KW-0564">Palmitate</keyword>
<keyword id="KW-0675">Receptor</keyword>
<keyword id="KW-1185">Reference proteome</keyword>
<keyword id="KW-0807">Transducer</keyword>
<keyword id="KW-0812">Transmembrane</keyword>
<keyword id="KW-1133">Transmembrane helix</keyword>
<evidence type="ECO:0000250" key="1"/>
<evidence type="ECO:0000250" key="2">
    <source>
        <dbReference type="UniProtKB" id="P29274"/>
    </source>
</evidence>
<evidence type="ECO:0000255" key="3"/>
<evidence type="ECO:0000255" key="4">
    <source>
        <dbReference type="PROSITE-ProRule" id="PRU00521"/>
    </source>
</evidence>
<evidence type="ECO:0000305" key="5"/>
<sequence>MQLETQDALYVALELVIAALAVAGNVLVCAAVGASSALQTPTNYFLVSLATADVAVGLFAIPFAITISLGFCTDFHGCLFLACFVLVLTQSSIFSLLAVAVDRYLAIRVPLRYKGLVTGTRARGIIAVLWVLAFGIGLTPFLGWNSKDSATSNCTELGDGIANKSCCPVTCLFENVVPMSYMVYFNFFGCVLPPLLIMLVIYIKIFMVACKQLQRMELMDHSRTTLQREIHAAKSLAMIVGIFALCWLPVHAINCITLFHPALAKDKPKWVMNVAILLSHANSVVNPIVYAYRNRDFRYSFHKIISRYVLCQAETKGGSGQAGAQSTLSLGL</sequence>
<accession>Q60614</accession>
<accession>Q8BXI2</accession>
<reference key="1">
    <citation type="journal article" date="1994" name="J. Immunol.">
        <title>Cloning of two adenosine receptor subtypes from mouse bone marrow-derived mast cells.</title>
        <authorList>
            <person name="Marquardt D.L."/>
            <person name="Walker L.L."/>
            <person name="Heinemann S."/>
        </authorList>
    </citation>
    <scope>NUCLEOTIDE SEQUENCE [MRNA]</scope>
    <source>
        <strain>BALB/cJ</strain>
        <tissue>Bone marrow</tissue>
    </source>
</reference>
<reference key="2">
    <citation type="journal article" date="2005" name="Science">
        <title>The transcriptional landscape of the mammalian genome.</title>
        <authorList>
            <person name="Carninci P."/>
            <person name="Kasukawa T."/>
            <person name="Katayama S."/>
            <person name="Gough J."/>
            <person name="Frith M.C."/>
            <person name="Maeda N."/>
            <person name="Oyama R."/>
            <person name="Ravasi T."/>
            <person name="Lenhard B."/>
            <person name="Wells C."/>
            <person name="Kodzius R."/>
            <person name="Shimokawa K."/>
            <person name="Bajic V.B."/>
            <person name="Brenner S.E."/>
            <person name="Batalov S."/>
            <person name="Forrest A.R."/>
            <person name="Zavolan M."/>
            <person name="Davis M.J."/>
            <person name="Wilming L.G."/>
            <person name="Aidinis V."/>
            <person name="Allen J.E."/>
            <person name="Ambesi-Impiombato A."/>
            <person name="Apweiler R."/>
            <person name="Aturaliya R.N."/>
            <person name="Bailey T.L."/>
            <person name="Bansal M."/>
            <person name="Baxter L."/>
            <person name="Beisel K.W."/>
            <person name="Bersano T."/>
            <person name="Bono H."/>
            <person name="Chalk A.M."/>
            <person name="Chiu K.P."/>
            <person name="Choudhary V."/>
            <person name="Christoffels A."/>
            <person name="Clutterbuck D.R."/>
            <person name="Crowe M.L."/>
            <person name="Dalla E."/>
            <person name="Dalrymple B.P."/>
            <person name="de Bono B."/>
            <person name="Della Gatta G."/>
            <person name="di Bernardo D."/>
            <person name="Down T."/>
            <person name="Engstrom P."/>
            <person name="Fagiolini M."/>
            <person name="Faulkner G."/>
            <person name="Fletcher C.F."/>
            <person name="Fukushima T."/>
            <person name="Furuno M."/>
            <person name="Futaki S."/>
            <person name="Gariboldi M."/>
            <person name="Georgii-Hemming P."/>
            <person name="Gingeras T.R."/>
            <person name="Gojobori T."/>
            <person name="Green R.E."/>
            <person name="Gustincich S."/>
            <person name="Harbers M."/>
            <person name="Hayashi Y."/>
            <person name="Hensch T.K."/>
            <person name="Hirokawa N."/>
            <person name="Hill D."/>
            <person name="Huminiecki L."/>
            <person name="Iacono M."/>
            <person name="Ikeo K."/>
            <person name="Iwama A."/>
            <person name="Ishikawa T."/>
            <person name="Jakt M."/>
            <person name="Kanapin A."/>
            <person name="Katoh M."/>
            <person name="Kawasawa Y."/>
            <person name="Kelso J."/>
            <person name="Kitamura H."/>
            <person name="Kitano H."/>
            <person name="Kollias G."/>
            <person name="Krishnan S.P."/>
            <person name="Kruger A."/>
            <person name="Kummerfeld S.K."/>
            <person name="Kurochkin I.V."/>
            <person name="Lareau L.F."/>
            <person name="Lazarevic D."/>
            <person name="Lipovich L."/>
            <person name="Liu J."/>
            <person name="Liuni S."/>
            <person name="McWilliam S."/>
            <person name="Madan Babu M."/>
            <person name="Madera M."/>
            <person name="Marchionni L."/>
            <person name="Matsuda H."/>
            <person name="Matsuzawa S."/>
            <person name="Miki H."/>
            <person name="Mignone F."/>
            <person name="Miyake S."/>
            <person name="Morris K."/>
            <person name="Mottagui-Tabar S."/>
            <person name="Mulder N."/>
            <person name="Nakano N."/>
            <person name="Nakauchi H."/>
            <person name="Ng P."/>
            <person name="Nilsson R."/>
            <person name="Nishiguchi S."/>
            <person name="Nishikawa S."/>
            <person name="Nori F."/>
            <person name="Ohara O."/>
            <person name="Okazaki Y."/>
            <person name="Orlando V."/>
            <person name="Pang K.C."/>
            <person name="Pavan W.J."/>
            <person name="Pavesi G."/>
            <person name="Pesole G."/>
            <person name="Petrovsky N."/>
            <person name="Piazza S."/>
            <person name="Reed J."/>
            <person name="Reid J.F."/>
            <person name="Ring B.Z."/>
            <person name="Ringwald M."/>
            <person name="Rost B."/>
            <person name="Ruan Y."/>
            <person name="Salzberg S.L."/>
            <person name="Sandelin A."/>
            <person name="Schneider C."/>
            <person name="Schoenbach C."/>
            <person name="Sekiguchi K."/>
            <person name="Semple C.A."/>
            <person name="Seno S."/>
            <person name="Sessa L."/>
            <person name="Sheng Y."/>
            <person name="Shibata Y."/>
            <person name="Shimada H."/>
            <person name="Shimada K."/>
            <person name="Silva D."/>
            <person name="Sinclair B."/>
            <person name="Sperling S."/>
            <person name="Stupka E."/>
            <person name="Sugiura K."/>
            <person name="Sultana R."/>
            <person name="Takenaka Y."/>
            <person name="Taki K."/>
            <person name="Tammoja K."/>
            <person name="Tan S.L."/>
            <person name="Tang S."/>
            <person name="Taylor M.S."/>
            <person name="Tegner J."/>
            <person name="Teichmann S.A."/>
            <person name="Ueda H.R."/>
            <person name="van Nimwegen E."/>
            <person name="Verardo R."/>
            <person name="Wei C.L."/>
            <person name="Yagi K."/>
            <person name="Yamanishi H."/>
            <person name="Zabarovsky E."/>
            <person name="Zhu S."/>
            <person name="Zimmer A."/>
            <person name="Hide W."/>
            <person name="Bult C."/>
            <person name="Grimmond S.M."/>
            <person name="Teasdale R.D."/>
            <person name="Liu E.T."/>
            <person name="Brusic V."/>
            <person name="Quackenbush J."/>
            <person name="Wahlestedt C."/>
            <person name="Mattick J.S."/>
            <person name="Hume D.A."/>
            <person name="Kai C."/>
            <person name="Sasaki D."/>
            <person name="Tomaru Y."/>
            <person name="Fukuda S."/>
            <person name="Kanamori-Katayama M."/>
            <person name="Suzuki M."/>
            <person name="Aoki J."/>
            <person name="Arakawa T."/>
            <person name="Iida J."/>
            <person name="Imamura K."/>
            <person name="Itoh M."/>
            <person name="Kato T."/>
            <person name="Kawaji H."/>
            <person name="Kawagashira N."/>
            <person name="Kawashima T."/>
            <person name="Kojima M."/>
            <person name="Kondo S."/>
            <person name="Konno H."/>
            <person name="Nakano K."/>
            <person name="Ninomiya N."/>
            <person name="Nishio T."/>
            <person name="Okada M."/>
            <person name="Plessy C."/>
            <person name="Shibata K."/>
            <person name="Shiraki T."/>
            <person name="Suzuki S."/>
            <person name="Tagami M."/>
            <person name="Waki K."/>
            <person name="Watahiki A."/>
            <person name="Okamura-Oho Y."/>
            <person name="Suzuki H."/>
            <person name="Kawai J."/>
            <person name="Hayashizaki Y."/>
        </authorList>
    </citation>
    <scope>NUCLEOTIDE SEQUENCE [LARGE SCALE MRNA]</scope>
    <source>
        <strain>C57BL/6J</strain>
        <tissue>Cerebellum</tissue>
    </source>
</reference>
<reference key="3">
    <citation type="journal article" date="2009" name="PLoS Biol.">
        <title>Lineage-specific biology revealed by a finished genome assembly of the mouse.</title>
        <authorList>
            <person name="Church D.M."/>
            <person name="Goodstadt L."/>
            <person name="Hillier L.W."/>
            <person name="Zody M.C."/>
            <person name="Goldstein S."/>
            <person name="She X."/>
            <person name="Bult C.J."/>
            <person name="Agarwala R."/>
            <person name="Cherry J.L."/>
            <person name="DiCuccio M."/>
            <person name="Hlavina W."/>
            <person name="Kapustin Y."/>
            <person name="Meric P."/>
            <person name="Maglott D."/>
            <person name="Birtle Z."/>
            <person name="Marques A.C."/>
            <person name="Graves T."/>
            <person name="Zhou S."/>
            <person name="Teague B."/>
            <person name="Potamousis K."/>
            <person name="Churas C."/>
            <person name="Place M."/>
            <person name="Herschleb J."/>
            <person name="Runnheim R."/>
            <person name="Forrest D."/>
            <person name="Amos-Landgraf J."/>
            <person name="Schwartz D.C."/>
            <person name="Cheng Z."/>
            <person name="Lindblad-Toh K."/>
            <person name="Eichler E.E."/>
            <person name="Ponting C.P."/>
        </authorList>
    </citation>
    <scope>NUCLEOTIDE SEQUENCE [LARGE SCALE GENOMIC DNA]</scope>
    <source>
        <strain>C57BL/6J</strain>
    </source>
</reference>
<reference key="4">
    <citation type="journal article" date="2004" name="Genome Res.">
        <title>The status, quality, and expansion of the NIH full-length cDNA project: the Mammalian Gene Collection (MGC).</title>
        <authorList>
            <consortium name="The MGC Project Team"/>
        </authorList>
    </citation>
    <scope>NUCLEOTIDE SEQUENCE [LARGE SCALE MRNA]</scope>
</reference>
<organism>
    <name type="scientific">Mus musculus</name>
    <name type="common">Mouse</name>
    <dbReference type="NCBI Taxonomy" id="10090"/>
    <lineage>
        <taxon>Eukaryota</taxon>
        <taxon>Metazoa</taxon>
        <taxon>Chordata</taxon>
        <taxon>Craniata</taxon>
        <taxon>Vertebrata</taxon>
        <taxon>Euteleostomi</taxon>
        <taxon>Mammalia</taxon>
        <taxon>Eutheria</taxon>
        <taxon>Euarchontoglires</taxon>
        <taxon>Glires</taxon>
        <taxon>Rodentia</taxon>
        <taxon>Myomorpha</taxon>
        <taxon>Muroidea</taxon>
        <taxon>Muridae</taxon>
        <taxon>Murinae</taxon>
        <taxon>Mus</taxon>
        <taxon>Mus</taxon>
    </lineage>
</organism>